<reference key="1">
    <citation type="journal article" date="1993" name="Development">
        <title>Nkx-2.5: a novel murine homeobox gene expressed in early heart progenitor cells and their myogenic descendants.</title>
        <authorList>
            <person name="Lints T.J."/>
            <person name="Parsons L.M."/>
            <person name="Hartley L."/>
            <person name="Lyons I."/>
            <person name="Harvey R.P."/>
        </authorList>
    </citation>
    <scope>NUCLEOTIDE SEQUENCE</scope>
    <source>
        <tissue>Heart</tissue>
    </source>
</reference>
<reference key="2">
    <citation type="journal article" date="1993" name="Development">
        <authorList>
            <person name="Lints T.J."/>
            <person name="Parsons L.M."/>
            <person name="Hartley L."/>
            <person name="Lyons I."/>
            <person name="Harvey R.P."/>
        </authorList>
    </citation>
    <scope>ERRATUM OF PUBMED:7904557</scope>
</reference>
<reference key="3">
    <citation type="journal article" date="1998" name="Development">
        <title>A GATA-dependent nkx-2.5 regulatory element activates early cardiac gene expression in transgenic mice.</title>
        <authorList>
            <person name="Searcy R.D."/>
            <person name="Vincent E.B."/>
            <person name="Liberatore C.M."/>
            <person name="Yutzey K.E."/>
        </authorList>
    </citation>
    <scope>NUCLEOTIDE SEQUENCE [GENOMIC DNA]</scope>
    <source>
        <strain>129/J</strain>
    </source>
</reference>
<reference key="4">
    <citation type="journal article" date="1993" name="Proc. Natl. Acad. Sci. U.S.A.">
        <title>Csx: a murine homeobox-containing gene specifically expressed in the developing heart.</title>
        <authorList>
            <person name="Komuro I."/>
            <person name="Izumo S."/>
        </authorList>
    </citation>
    <scope>NUCLEOTIDE SEQUENCE [MRNA] OF 17-318</scope>
</reference>
<reference key="5">
    <citation type="journal article" date="1998" name="J. Biol. Chem.">
        <title>Homeodomain-interacting protein kinases, a novel family of co-repressors for homeodomain transcription factors.</title>
        <authorList>
            <person name="Kim Y.H."/>
            <person name="Choi C.Y."/>
            <person name="Lee S.-J."/>
            <person name="Conti M.A."/>
            <person name="Kim Y."/>
        </authorList>
    </citation>
    <scope>INTERACTION WITH HIPK1 AND HIPK2</scope>
    <source>
        <strain>BALB/cJ</strain>
    </source>
</reference>
<reference key="6">
    <citation type="journal article" date="1998" name="Mol. Cell. Biol.">
        <title>The cardiac tissue-restricted homeobox protein Csx/Nkx2.5 physically associates with the zinc finger protein GATA4 and cooperatively activates atrial natriuretic factor gene expression.</title>
        <authorList>
            <person name="Lee Y."/>
            <person name="Shioi T."/>
            <person name="Kasahara H."/>
            <person name="Jobe S.M."/>
            <person name="Wiese R.J."/>
            <person name="Markham B.E."/>
            <person name="Izumo S."/>
        </authorList>
    </citation>
    <scope>FUNCTION</scope>
    <scope>INTERACTION WITH GATA4</scope>
</reference>
<reference key="7">
    <citation type="journal article" date="2002" name="Genes Dev.">
        <title>Cooperative action of Tbx2 and Nkx2.5 inhibits ANF expression in the atrioventricular canal: implications for cardiac chamber formation.</title>
        <authorList>
            <person name="Habets P.E."/>
            <person name="Moorman A.F."/>
            <person name="Clout D.E."/>
            <person name="van Roon M.A."/>
            <person name="Lingbeek M."/>
            <person name="van Lohuizen M."/>
            <person name="Campione M."/>
            <person name="Christoffels V.M."/>
        </authorList>
    </citation>
    <scope>FUNCTION</scope>
</reference>
<reference key="8">
    <citation type="journal article" date="2004" name="J. Cell Biol.">
        <title>A novel LIM protein Cal promotes cardiac differentiation by association with CSX/NKX2-5.</title>
        <authorList>
            <person name="Akazawa H."/>
            <person name="Kudoh S."/>
            <person name="Mochizuki N."/>
            <person name="Takekoshi N."/>
            <person name="Takano H."/>
            <person name="Nagai T."/>
            <person name="Komuro I."/>
        </authorList>
    </citation>
    <scope>INTERACTION WITH FBLIM1</scope>
</reference>
<reference key="9">
    <citation type="journal article" date="2004" name="Mol. Cell. Biol.">
        <title>Jumonji represses atrial natriuretic factor gene expression by inhibiting transcriptional activities of cardiac transcription factors.</title>
        <authorList>
            <person name="Kim T.-G."/>
            <person name="Chen J."/>
            <person name="Sadoshima J."/>
            <person name="Lee Y."/>
        </authorList>
    </citation>
    <scope>INTERACTION WITH JARID2</scope>
</reference>
<reference key="10">
    <citation type="journal article" date="2006" name="Development">
        <title>Tbx1 affects asymmetric cardiac morphogenesis by regulating Pitx2 in the secondary heart field.</title>
        <authorList>
            <person name="Nowotschin S."/>
            <person name="Liao J."/>
            <person name="Gage P.J."/>
            <person name="Epstein J.A."/>
            <person name="Campione M."/>
            <person name="Morrow B.E."/>
        </authorList>
    </citation>
    <scope>FUNCTION</scope>
    <scope>INTERACTION WITH TBX1</scope>
</reference>
<reference key="11">
    <citation type="journal article" date="2007" name="J. Biol. Chem.">
        <title>Transcriptional repression by the T-box proteins Tbx18 and Tbx15 depends on Groucho corepressors.</title>
        <authorList>
            <person name="Farin H.F."/>
            <person name="Bussen M."/>
            <person name="Schmidt M.K."/>
            <person name="Singh M.K."/>
            <person name="Schuster-Gossler K."/>
            <person name="Kispert A."/>
        </authorList>
    </citation>
    <scope>INTERACTION WITH TBX18</scope>
</reference>
<reference key="12">
    <citation type="journal article" date="2009" name="Nature">
        <title>A histone H3 lysine 36 trimethyltransferase links Nkx2-5 to Wolf-Hirschhorn syndrome.</title>
        <authorList>
            <person name="Nimura K."/>
            <person name="Ura K."/>
            <person name="Shiratori H."/>
            <person name="Ikawa M."/>
            <person name="Okabe M."/>
            <person name="Schwartz R.J."/>
            <person name="Kaneda Y."/>
        </authorList>
    </citation>
    <scope>FUNCTION</scope>
    <scope>INTERACTION WITH NSD2</scope>
    <scope>SUBCELLULAR LOCATION</scope>
</reference>
<reference key="13">
    <citation type="journal article" date="2012" name="Dev. Cell">
        <title>Congenital asplenia in mice and humans with mutations in a Pbx/Nkx2-5/p15 module.</title>
        <authorList>
            <person name="Koss M."/>
            <person name="Bolze A."/>
            <person name="Brendolan A."/>
            <person name="Saggese M."/>
            <person name="Capellini T.D."/>
            <person name="Bojilova E."/>
            <person name="Boisson B."/>
            <person name="Prall O.W."/>
            <person name="Elliott D.A."/>
            <person name="Solloway M."/>
            <person name="Lenti E."/>
            <person name="Hidaka C."/>
            <person name="Chang C.P."/>
            <person name="Mahlaoui N."/>
            <person name="Harvey R.P."/>
            <person name="Casanova J.L."/>
            <person name="Selleri L."/>
        </authorList>
    </citation>
    <scope>FUNCTION</scope>
</reference>
<organism>
    <name type="scientific">Mus musculus</name>
    <name type="common">Mouse</name>
    <dbReference type="NCBI Taxonomy" id="10090"/>
    <lineage>
        <taxon>Eukaryota</taxon>
        <taxon>Metazoa</taxon>
        <taxon>Chordata</taxon>
        <taxon>Craniata</taxon>
        <taxon>Vertebrata</taxon>
        <taxon>Euteleostomi</taxon>
        <taxon>Mammalia</taxon>
        <taxon>Eutheria</taxon>
        <taxon>Euarchontoglires</taxon>
        <taxon>Glires</taxon>
        <taxon>Rodentia</taxon>
        <taxon>Myomorpha</taxon>
        <taxon>Muroidea</taxon>
        <taxon>Muridae</taxon>
        <taxon>Murinae</taxon>
        <taxon>Mus</taxon>
        <taxon>Mus</taxon>
    </lineage>
</organism>
<keyword id="KW-0002">3D-structure</keyword>
<keyword id="KW-0217">Developmental protein</keyword>
<keyword id="KW-0238">DNA-binding</keyword>
<keyword id="KW-0371">Homeobox</keyword>
<keyword id="KW-0539">Nucleus</keyword>
<keyword id="KW-1185">Reference proteome</keyword>
<proteinExistence type="evidence at protein level"/>
<dbReference type="EMBL" id="L20300">
    <property type="status" value="NOT_ANNOTATED_CDS"/>
    <property type="molecule type" value="mRNA"/>
</dbReference>
<dbReference type="EMBL" id="AF091351">
    <property type="protein sequence ID" value="AAC97934.1"/>
    <property type="molecule type" value="Genomic_DNA"/>
</dbReference>
<dbReference type="EMBL" id="X75415">
    <property type="protein sequence ID" value="CAA53169.1"/>
    <property type="molecule type" value="mRNA"/>
</dbReference>
<dbReference type="CCDS" id="CCDS28556.1"/>
<dbReference type="RefSeq" id="NP_032726.1">
    <property type="nucleotide sequence ID" value="NM_008700.2"/>
</dbReference>
<dbReference type="RefSeq" id="XP_006523860.1">
    <property type="nucleotide sequence ID" value="XM_006523797.4"/>
</dbReference>
<dbReference type="PDB" id="5FLV">
    <property type="method" value="X-ray"/>
    <property type="resolution" value="3.00 A"/>
    <property type="chains" value="A/E/I/M=134-197"/>
</dbReference>
<dbReference type="PDBsum" id="5FLV"/>
<dbReference type="SMR" id="P42582"/>
<dbReference type="BioGRID" id="201778">
    <property type="interactions" value="12"/>
</dbReference>
<dbReference type="ComplexPortal" id="CPX-72">
    <property type="entry name" value="NKX2-5 homodimer complex"/>
</dbReference>
<dbReference type="CORUM" id="P42582"/>
<dbReference type="DIP" id="DIP-33031N"/>
<dbReference type="FunCoup" id="P42582">
    <property type="interactions" value="300"/>
</dbReference>
<dbReference type="IntAct" id="P42582">
    <property type="interactions" value="6"/>
</dbReference>
<dbReference type="STRING" id="10090.ENSMUSP00000015723"/>
<dbReference type="BindingDB" id="P42582"/>
<dbReference type="ChEMBL" id="CHEMBL4105872"/>
<dbReference type="GlyGen" id="P42582">
    <property type="glycosylation" value="1 site, 1 O-linked glycan (1 site)"/>
</dbReference>
<dbReference type="iPTMnet" id="P42582"/>
<dbReference type="PhosphoSitePlus" id="P42582"/>
<dbReference type="PaxDb" id="10090-ENSMUSP00000015723"/>
<dbReference type="ProteomicsDB" id="293854"/>
<dbReference type="Pumba" id="P42582"/>
<dbReference type="Antibodypedia" id="28950">
    <property type="antibodies" value="507 antibodies from 40 providers"/>
</dbReference>
<dbReference type="DNASU" id="18091"/>
<dbReference type="Ensembl" id="ENSMUST00000015723.5">
    <property type="protein sequence ID" value="ENSMUSP00000015723.5"/>
    <property type="gene ID" value="ENSMUSG00000015579.6"/>
</dbReference>
<dbReference type="GeneID" id="18091"/>
<dbReference type="KEGG" id="mmu:18091"/>
<dbReference type="UCSC" id="uc008beo.1">
    <property type="organism name" value="mouse"/>
</dbReference>
<dbReference type="AGR" id="MGI:97350"/>
<dbReference type="CTD" id="1482"/>
<dbReference type="MGI" id="MGI:97350">
    <property type="gene designation" value="Nkx2-5"/>
</dbReference>
<dbReference type="VEuPathDB" id="HostDB:ENSMUSG00000015579"/>
<dbReference type="eggNOG" id="KOG0842">
    <property type="taxonomic scope" value="Eukaryota"/>
</dbReference>
<dbReference type="GeneTree" id="ENSGT00940000158996"/>
<dbReference type="HOGENOM" id="CLU_049543_0_0_1"/>
<dbReference type="InParanoid" id="P42582"/>
<dbReference type="OMA" id="CNASYSC"/>
<dbReference type="OrthoDB" id="6159439at2759"/>
<dbReference type="PhylomeDB" id="P42582"/>
<dbReference type="TreeFam" id="TF351204"/>
<dbReference type="BioGRID-ORCS" id="18091">
    <property type="hits" value="2 hits in 80 CRISPR screens"/>
</dbReference>
<dbReference type="ChiTaRS" id="Nkx2-5">
    <property type="organism name" value="mouse"/>
</dbReference>
<dbReference type="PRO" id="PR:P42582"/>
<dbReference type="Proteomes" id="UP000000589">
    <property type="component" value="Chromosome 17"/>
</dbReference>
<dbReference type="RNAct" id="P42582">
    <property type="molecule type" value="protein"/>
</dbReference>
<dbReference type="Bgee" id="ENSMUSG00000015579">
    <property type="expression patterns" value="Expressed in cardiac atrium and 89 other cell types or tissues"/>
</dbReference>
<dbReference type="ExpressionAtlas" id="P42582">
    <property type="expression patterns" value="baseline and differential"/>
</dbReference>
<dbReference type="GO" id="GO:0005737">
    <property type="term" value="C:cytoplasm"/>
    <property type="evidence" value="ECO:0000314"/>
    <property type="project" value="BHF-UCL"/>
</dbReference>
<dbReference type="GO" id="GO:0005829">
    <property type="term" value="C:cytosol"/>
    <property type="evidence" value="ECO:0007669"/>
    <property type="project" value="Ensembl"/>
</dbReference>
<dbReference type="GO" id="GO:1990664">
    <property type="term" value="C:Nkx-2.5 complex"/>
    <property type="evidence" value="ECO:0000266"/>
    <property type="project" value="ComplexPortal"/>
</dbReference>
<dbReference type="GO" id="GO:0005654">
    <property type="term" value="C:nucleoplasm"/>
    <property type="evidence" value="ECO:0000304"/>
    <property type="project" value="Reactome"/>
</dbReference>
<dbReference type="GO" id="GO:0005634">
    <property type="term" value="C:nucleus"/>
    <property type="evidence" value="ECO:0000314"/>
    <property type="project" value="BHF-UCL"/>
</dbReference>
<dbReference type="GO" id="GO:0032993">
    <property type="term" value="C:protein-DNA complex"/>
    <property type="evidence" value="ECO:0000250"/>
    <property type="project" value="UniProtKB"/>
</dbReference>
<dbReference type="GO" id="GO:0005667">
    <property type="term" value="C:transcription regulator complex"/>
    <property type="evidence" value="ECO:0000314"/>
    <property type="project" value="MGI"/>
</dbReference>
<dbReference type="GO" id="GO:0003682">
    <property type="term" value="F:chromatin binding"/>
    <property type="evidence" value="ECO:0000314"/>
    <property type="project" value="MGI"/>
</dbReference>
<dbReference type="GO" id="GO:0003677">
    <property type="term" value="F:DNA binding"/>
    <property type="evidence" value="ECO:0000314"/>
    <property type="project" value="UniProtKB"/>
</dbReference>
<dbReference type="GO" id="GO:0001228">
    <property type="term" value="F:DNA-binding transcription activator activity, RNA polymerase II-specific"/>
    <property type="evidence" value="ECO:0000314"/>
    <property type="project" value="BHF-UCL"/>
</dbReference>
<dbReference type="GO" id="GO:0003700">
    <property type="term" value="F:DNA-binding transcription factor activity"/>
    <property type="evidence" value="ECO:0000314"/>
    <property type="project" value="MGI"/>
</dbReference>
<dbReference type="GO" id="GO:0000981">
    <property type="term" value="F:DNA-binding transcription factor activity, RNA polymerase II-specific"/>
    <property type="evidence" value="ECO:0000314"/>
    <property type="project" value="MGI"/>
</dbReference>
<dbReference type="GO" id="GO:0042803">
    <property type="term" value="F:protein homodimerization activity"/>
    <property type="evidence" value="ECO:0000314"/>
    <property type="project" value="UniProtKB"/>
</dbReference>
<dbReference type="GO" id="GO:0000978">
    <property type="term" value="F:RNA polymerase II cis-regulatory region sequence-specific DNA binding"/>
    <property type="evidence" value="ECO:0000314"/>
    <property type="project" value="BHF-UCL"/>
</dbReference>
<dbReference type="GO" id="GO:0061629">
    <property type="term" value="F:RNA polymerase II-specific DNA-binding transcription factor binding"/>
    <property type="evidence" value="ECO:0007669"/>
    <property type="project" value="Ensembl"/>
</dbReference>
<dbReference type="GO" id="GO:0000976">
    <property type="term" value="F:transcription cis-regulatory region binding"/>
    <property type="evidence" value="ECO:0000250"/>
    <property type="project" value="UniProtKB"/>
</dbReference>
<dbReference type="GO" id="GO:0007512">
    <property type="term" value="P:adult heart development"/>
    <property type="evidence" value="ECO:0000315"/>
    <property type="project" value="MGI"/>
</dbReference>
<dbReference type="GO" id="GO:0006915">
    <property type="term" value="P:apoptotic process"/>
    <property type="evidence" value="ECO:0000316"/>
    <property type="project" value="MGI"/>
</dbReference>
<dbReference type="GO" id="GO:0003278">
    <property type="term" value="P:apoptotic process involved in heart morphogenesis"/>
    <property type="evidence" value="ECO:0000315"/>
    <property type="project" value="MGI"/>
</dbReference>
<dbReference type="GO" id="GO:0055014">
    <property type="term" value="P:atrial cardiac muscle cell development"/>
    <property type="evidence" value="ECO:0000304"/>
    <property type="project" value="BHF-UCL"/>
</dbReference>
<dbReference type="GO" id="GO:0003228">
    <property type="term" value="P:atrial cardiac muscle tissue development"/>
    <property type="evidence" value="ECO:0000315"/>
    <property type="project" value="BHF-UCL"/>
</dbReference>
<dbReference type="GO" id="GO:0060413">
    <property type="term" value="P:atrial septum morphogenesis"/>
    <property type="evidence" value="ECO:0007669"/>
    <property type="project" value="Ensembl"/>
</dbReference>
<dbReference type="GO" id="GO:0060928">
    <property type="term" value="P:atrioventricular node cell development"/>
    <property type="evidence" value="ECO:0000315"/>
    <property type="project" value="MGI"/>
</dbReference>
<dbReference type="GO" id="GO:0060929">
    <property type="term" value="P:atrioventricular node cell fate commitment"/>
    <property type="evidence" value="ECO:0000315"/>
    <property type="project" value="MGI"/>
</dbReference>
<dbReference type="GO" id="GO:0003162">
    <property type="term" value="P:atrioventricular node development"/>
    <property type="evidence" value="ECO:0000315"/>
    <property type="project" value="BHF-UCL"/>
</dbReference>
<dbReference type="GO" id="GO:0003166">
    <property type="term" value="P:bundle of His development"/>
    <property type="evidence" value="ECO:0000316"/>
    <property type="project" value="MGI"/>
</dbReference>
<dbReference type="GO" id="GO:0003161">
    <property type="term" value="P:cardiac conduction system development"/>
    <property type="evidence" value="ECO:0000316"/>
    <property type="project" value="MGI"/>
</dbReference>
<dbReference type="GO" id="GO:0055013">
    <property type="term" value="P:cardiac muscle cell development"/>
    <property type="evidence" value="ECO:0000315"/>
    <property type="project" value="BHF-UCL"/>
</dbReference>
<dbReference type="GO" id="GO:0055007">
    <property type="term" value="P:cardiac muscle cell differentiation"/>
    <property type="evidence" value="ECO:0000314"/>
    <property type="project" value="UniProtKB"/>
</dbReference>
<dbReference type="GO" id="GO:0060038">
    <property type="term" value="P:cardiac muscle cell proliferation"/>
    <property type="evidence" value="ECO:0000316"/>
    <property type="project" value="MGI"/>
</dbReference>
<dbReference type="GO" id="GO:0060048">
    <property type="term" value="P:cardiac muscle contraction"/>
    <property type="evidence" value="ECO:0000315"/>
    <property type="project" value="MGI"/>
</dbReference>
<dbReference type="GO" id="GO:0048738">
    <property type="term" value="P:cardiac muscle tissue development"/>
    <property type="evidence" value="ECO:0000315"/>
    <property type="project" value="MGI"/>
</dbReference>
<dbReference type="GO" id="GO:0055008">
    <property type="term" value="P:cardiac muscle tissue morphogenesis"/>
    <property type="evidence" value="ECO:0000315"/>
    <property type="project" value="BHF-UCL"/>
</dbReference>
<dbReference type="GO" id="GO:0060411">
    <property type="term" value="P:cardiac septum morphogenesis"/>
    <property type="evidence" value="ECO:0000315"/>
    <property type="project" value="ComplexPortal"/>
</dbReference>
<dbReference type="GO" id="GO:0003211">
    <property type="term" value="P:cardiac ventricle formation"/>
    <property type="evidence" value="ECO:0000316"/>
    <property type="project" value="MGI"/>
</dbReference>
<dbReference type="GO" id="GO:0003208">
    <property type="term" value="P:cardiac ventricle morphogenesis"/>
    <property type="evidence" value="ECO:0000315"/>
    <property type="project" value="MGI"/>
</dbReference>
<dbReference type="GO" id="GO:0008283">
    <property type="term" value="P:cell population proliferation"/>
    <property type="evidence" value="ECO:0000316"/>
    <property type="project" value="MGI"/>
</dbReference>
<dbReference type="GO" id="GO:0035050">
    <property type="term" value="P:embryonic heart tube development"/>
    <property type="evidence" value="ECO:0000316"/>
    <property type="project" value="MGI"/>
</dbReference>
<dbReference type="GO" id="GO:0060971">
    <property type="term" value="P:embryonic heart tube left/right pattern formation"/>
    <property type="evidence" value="ECO:0000315"/>
    <property type="project" value="MGI"/>
</dbReference>
<dbReference type="GO" id="GO:0007492">
    <property type="term" value="P:endoderm development"/>
    <property type="evidence" value="ECO:0000304"/>
    <property type="project" value="BHF-UCL"/>
</dbReference>
<dbReference type="GO" id="GO:1904019">
    <property type="term" value="P:epithelial cell apoptotic process"/>
    <property type="evidence" value="ECO:0000316"/>
    <property type="project" value="MGI"/>
</dbReference>
<dbReference type="GO" id="GO:0030855">
    <property type="term" value="P:epithelial cell differentiation"/>
    <property type="evidence" value="ECO:0000316"/>
    <property type="project" value="MGI"/>
</dbReference>
<dbReference type="GO" id="GO:0050673">
    <property type="term" value="P:epithelial cell proliferation"/>
    <property type="evidence" value="ECO:0000316"/>
    <property type="project" value="MGI"/>
</dbReference>
<dbReference type="GO" id="GO:0060047">
    <property type="term" value="P:heart contraction"/>
    <property type="evidence" value="ECO:0000316"/>
    <property type="project" value="MGI"/>
</dbReference>
<dbReference type="GO" id="GO:0007507">
    <property type="term" value="P:heart development"/>
    <property type="evidence" value="ECO:0000315"/>
    <property type="project" value="MGI"/>
</dbReference>
<dbReference type="GO" id="GO:0001947">
    <property type="term" value="P:heart looping"/>
    <property type="evidence" value="ECO:0000315"/>
    <property type="project" value="MGI"/>
</dbReference>
<dbReference type="GO" id="GO:0003007">
    <property type="term" value="P:heart morphogenesis"/>
    <property type="evidence" value="ECO:0000315"/>
    <property type="project" value="BHF-UCL"/>
</dbReference>
<dbReference type="GO" id="GO:0060347">
    <property type="term" value="P:heart trabecula formation"/>
    <property type="evidence" value="ECO:0000315"/>
    <property type="project" value="MGI"/>
</dbReference>
<dbReference type="GO" id="GO:0030097">
    <property type="term" value="P:hemopoiesis"/>
    <property type="evidence" value="ECO:0000315"/>
    <property type="project" value="MGI"/>
</dbReference>
<dbReference type="GO" id="GO:0090090">
    <property type="term" value="P:negative regulation of canonical Wnt signaling pathway"/>
    <property type="evidence" value="ECO:0000314"/>
    <property type="project" value="BHF-UCL"/>
</dbReference>
<dbReference type="GO" id="GO:0010667">
    <property type="term" value="P:negative regulation of cardiac muscle cell apoptotic process"/>
    <property type="evidence" value="ECO:0000315"/>
    <property type="project" value="BHF-UCL"/>
</dbReference>
<dbReference type="GO" id="GO:1904036">
    <property type="term" value="P:negative regulation of epithelial cell apoptotic process"/>
    <property type="evidence" value="ECO:0000316"/>
    <property type="project" value="MGI"/>
</dbReference>
<dbReference type="GO" id="GO:0010832">
    <property type="term" value="P:negative regulation of myotube differentiation"/>
    <property type="evidence" value="ECO:0007669"/>
    <property type="project" value="Ensembl"/>
</dbReference>
<dbReference type="GO" id="GO:0000122">
    <property type="term" value="P:negative regulation of transcription by RNA polymerase II"/>
    <property type="evidence" value="ECO:0000314"/>
    <property type="project" value="MGI"/>
</dbReference>
<dbReference type="GO" id="GO:0003151">
    <property type="term" value="P:outflow tract morphogenesis"/>
    <property type="evidence" value="ECO:0000315"/>
    <property type="project" value="MGI"/>
</dbReference>
<dbReference type="GO" id="GO:0003148">
    <property type="term" value="P:outflow tract septum morphogenesis"/>
    <property type="evidence" value="ECO:0007669"/>
    <property type="project" value="Ensembl"/>
</dbReference>
<dbReference type="GO" id="GO:0060037">
    <property type="term" value="P:pharyngeal system development"/>
    <property type="evidence" value="ECO:0000316"/>
    <property type="project" value="MGI"/>
</dbReference>
<dbReference type="GO" id="GO:0051891">
    <property type="term" value="P:positive regulation of cardioblast differentiation"/>
    <property type="evidence" value="ECO:0000315"/>
    <property type="project" value="BHF-UCL"/>
</dbReference>
<dbReference type="GO" id="GO:0045893">
    <property type="term" value="P:positive regulation of DNA-templated transcription"/>
    <property type="evidence" value="ECO:0000314"/>
    <property type="project" value="MGI"/>
</dbReference>
<dbReference type="GO" id="GO:0050679">
    <property type="term" value="P:positive regulation of epithelial cell proliferation"/>
    <property type="evidence" value="ECO:0000316"/>
    <property type="project" value="MGI"/>
</dbReference>
<dbReference type="GO" id="GO:0010628">
    <property type="term" value="P:positive regulation of gene expression"/>
    <property type="evidence" value="ECO:0000314"/>
    <property type="project" value="UniProtKB"/>
</dbReference>
<dbReference type="GO" id="GO:0045823">
    <property type="term" value="P:positive regulation of heart contraction"/>
    <property type="evidence" value="ECO:0000315"/>
    <property type="project" value="BHF-UCL"/>
</dbReference>
<dbReference type="GO" id="GO:0045666">
    <property type="term" value="P:positive regulation of neuron differentiation"/>
    <property type="evidence" value="ECO:0007669"/>
    <property type="project" value="Ensembl"/>
</dbReference>
<dbReference type="GO" id="GO:0010765">
    <property type="term" value="P:positive regulation of sodium ion transport"/>
    <property type="evidence" value="ECO:0000315"/>
    <property type="project" value="BHF-UCL"/>
</dbReference>
<dbReference type="GO" id="GO:0045944">
    <property type="term" value="P:positive regulation of transcription by RNA polymerase II"/>
    <property type="evidence" value="ECO:0000314"/>
    <property type="project" value="BHF-UCL"/>
</dbReference>
<dbReference type="GO" id="GO:0060261">
    <property type="term" value="P:positive regulation of transcription initiation by RNA polymerase II"/>
    <property type="evidence" value="ECO:0000314"/>
    <property type="project" value="BHF-UCL"/>
</dbReference>
<dbReference type="GO" id="GO:0003342">
    <property type="term" value="P:proepicardium development"/>
    <property type="evidence" value="ECO:0000315"/>
    <property type="project" value="MGI"/>
</dbReference>
<dbReference type="GO" id="GO:0003350">
    <property type="term" value="P:pulmonary myocardium development"/>
    <property type="evidence" value="ECO:0000315"/>
    <property type="project" value="MGI"/>
</dbReference>
<dbReference type="GO" id="GO:0003168">
    <property type="term" value="P:Purkinje myocyte differentiation"/>
    <property type="evidence" value="ECO:0000315"/>
    <property type="project" value="MGI"/>
</dbReference>
<dbReference type="GO" id="GO:1903779">
    <property type="term" value="P:regulation of cardiac conduction"/>
    <property type="evidence" value="ECO:0000315"/>
    <property type="project" value="BHF-UCL"/>
</dbReference>
<dbReference type="GO" id="GO:0060043">
    <property type="term" value="P:regulation of cardiac muscle cell proliferation"/>
    <property type="evidence" value="ECO:0000314"/>
    <property type="project" value="MGI"/>
</dbReference>
<dbReference type="GO" id="GO:0055117">
    <property type="term" value="P:regulation of cardiac muscle contraction"/>
    <property type="evidence" value="ECO:0000315"/>
    <property type="project" value="BHF-UCL"/>
</dbReference>
<dbReference type="GO" id="GO:0006357">
    <property type="term" value="P:regulation of transcription by RNA polymerase II"/>
    <property type="evidence" value="ECO:0000314"/>
    <property type="project" value="MGI"/>
</dbReference>
<dbReference type="GO" id="GO:0003221">
    <property type="term" value="P:right ventricular cardiac muscle tissue morphogenesis"/>
    <property type="evidence" value="ECO:0007669"/>
    <property type="project" value="Ensembl"/>
</dbReference>
<dbReference type="GO" id="GO:0003285">
    <property type="term" value="P:septum secundum development"/>
    <property type="evidence" value="ECO:0007669"/>
    <property type="project" value="Ensembl"/>
</dbReference>
<dbReference type="GO" id="GO:0048536">
    <property type="term" value="P:spleen development"/>
    <property type="evidence" value="ECO:0000316"/>
    <property type="project" value="MGI"/>
</dbReference>
<dbReference type="GO" id="GO:0030878">
    <property type="term" value="P:thyroid gland development"/>
    <property type="evidence" value="ECO:0000315"/>
    <property type="project" value="BHF-UCL"/>
</dbReference>
<dbReference type="GO" id="GO:0043586">
    <property type="term" value="P:tongue development"/>
    <property type="evidence" value="ECO:0000304"/>
    <property type="project" value="BHF-UCL"/>
</dbReference>
<dbReference type="GO" id="GO:0006366">
    <property type="term" value="P:transcription by RNA polymerase II"/>
    <property type="evidence" value="ECO:0000316"/>
    <property type="project" value="MGI"/>
</dbReference>
<dbReference type="GO" id="GO:0001570">
    <property type="term" value="P:vasculogenesis"/>
    <property type="evidence" value="ECO:0000315"/>
    <property type="project" value="MGI"/>
</dbReference>
<dbReference type="GO" id="GO:0055015">
    <property type="term" value="P:ventricular cardiac muscle cell development"/>
    <property type="evidence" value="ECO:0000304"/>
    <property type="project" value="BHF-UCL"/>
</dbReference>
<dbReference type="GO" id="GO:0055005">
    <property type="term" value="P:ventricular cardiac myofibril assembly"/>
    <property type="evidence" value="ECO:0000315"/>
    <property type="project" value="MGI"/>
</dbReference>
<dbReference type="GO" id="GO:0060412">
    <property type="term" value="P:ventricular septum morphogenesis"/>
    <property type="evidence" value="ECO:0007669"/>
    <property type="project" value="Ensembl"/>
</dbReference>
<dbReference type="GO" id="GO:0003222">
    <property type="term" value="P:ventricular trabecula myocardium morphogenesis"/>
    <property type="evidence" value="ECO:0000315"/>
    <property type="project" value="MGI"/>
</dbReference>
<dbReference type="CDD" id="cd00086">
    <property type="entry name" value="homeodomain"/>
    <property type="match status" value="1"/>
</dbReference>
<dbReference type="FunFam" id="1.10.10.60:FF:000078">
    <property type="entry name" value="NK2 homeobox 3"/>
    <property type="match status" value="1"/>
</dbReference>
<dbReference type="Gene3D" id="1.10.10.60">
    <property type="entry name" value="Homeodomain-like"/>
    <property type="match status" value="1"/>
</dbReference>
<dbReference type="InterPro" id="IPR001356">
    <property type="entry name" value="HD"/>
</dbReference>
<dbReference type="InterPro" id="IPR020479">
    <property type="entry name" value="HD_metazoa"/>
</dbReference>
<dbReference type="InterPro" id="IPR017970">
    <property type="entry name" value="Homeobox_CS"/>
</dbReference>
<dbReference type="InterPro" id="IPR050394">
    <property type="entry name" value="Homeobox_NK-like"/>
</dbReference>
<dbReference type="InterPro" id="IPR009057">
    <property type="entry name" value="Homeodomain-like_sf"/>
</dbReference>
<dbReference type="PANTHER" id="PTHR24340">
    <property type="entry name" value="HOMEOBOX PROTEIN NKX"/>
    <property type="match status" value="1"/>
</dbReference>
<dbReference type="PANTHER" id="PTHR24340:SF28">
    <property type="entry name" value="HOMEOBOX PROTEIN NKX-2.5"/>
    <property type="match status" value="1"/>
</dbReference>
<dbReference type="Pfam" id="PF00046">
    <property type="entry name" value="Homeodomain"/>
    <property type="match status" value="1"/>
</dbReference>
<dbReference type="PRINTS" id="PR00024">
    <property type="entry name" value="HOMEOBOX"/>
</dbReference>
<dbReference type="SMART" id="SM00389">
    <property type="entry name" value="HOX"/>
    <property type="match status" value="1"/>
</dbReference>
<dbReference type="SUPFAM" id="SSF46689">
    <property type="entry name" value="Homeodomain-like"/>
    <property type="match status" value="1"/>
</dbReference>
<dbReference type="PROSITE" id="PS00027">
    <property type="entry name" value="HOMEOBOX_1"/>
    <property type="match status" value="1"/>
</dbReference>
<dbReference type="PROSITE" id="PS50071">
    <property type="entry name" value="HOMEOBOX_2"/>
    <property type="match status" value="1"/>
</dbReference>
<evidence type="ECO:0000250" key="1">
    <source>
        <dbReference type="UniProtKB" id="P52952"/>
    </source>
</evidence>
<evidence type="ECO:0000255" key="2">
    <source>
        <dbReference type="PROSITE-ProRule" id="PRU00108"/>
    </source>
</evidence>
<evidence type="ECO:0000269" key="3">
    <source>
    </source>
</evidence>
<evidence type="ECO:0000269" key="4">
    <source>
    </source>
</evidence>
<evidence type="ECO:0000269" key="5">
    <source>
    </source>
</evidence>
<evidence type="ECO:0000269" key="6">
    <source>
    </source>
</evidence>
<evidence type="ECO:0000269" key="7">
    <source>
    </source>
</evidence>
<evidence type="ECO:0000269" key="8">
    <source>
    </source>
</evidence>
<evidence type="ECO:0000269" key="9">
    <source>
    </source>
</evidence>
<evidence type="ECO:0000269" key="10">
    <source>
    </source>
</evidence>
<evidence type="ECO:0000269" key="11">
    <source>
    </source>
</evidence>
<evidence type="ECO:0000305" key="12"/>
<evidence type="ECO:0007829" key="13">
    <source>
        <dbReference type="PDB" id="5FLV"/>
    </source>
</evidence>
<name>NKX25_MOUSE</name>
<gene>
    <name type="primary">Nkx2-5</name>
    <name type="synonym">Csx</name>
    <name type="synonym">Nkx-2.5</name>
    <name type="synonym">Nkx2e</name>
</gene>
<feature type="chain" id="PRO_0000048938" description="Homeobox protein Nkx-2.5">
    <location>
        <begin position="1"/>
        <end position="318"/>
    </location>
</feature>
<feature type="DNA-binding region" description="Homeobox" evidence="1 2">
    <location>
        <begin position="137"/>
        <end position="196"/>
    </location>
</feature>
<feature type="sequence conflict" description="In Ref. 4; L20300." evidence="12" ref="4">
    <original>A</original>
    <variation>R</variation>
    <location>
        <position position="62"/>
    </location>
</feature>
<feature type="sequence conflict" description="In Ref. 1." evidence="12" ref="1">
    <original>AP</original>
    <variation>PA</variation>
    <location>
        <begin position="164"/>
        <end position="165"/>
    </location>
</feature>
<feature type="sequence conflict" description="In Ref. 3." evidence="12" ref="3">
    <original>A</original>
    <variation>T</variation>
    <location>
        <position position="234"/>
    </location>
</feature>
<feature type="sequence conflict" description="In Ref. 1." evidence="12" ref="1">
    <original>QP</original>
    <variation>HA</variation>
    <location>
        <begin position="276"/>
        <end position="277"/>
    </location>
</feature>
<feature type="helix" evidence="13">
    <location>
        <begin position="146"/>
        <end position="156"/>
    </location>
</feature>
<feature type="helix" evidence="13">
    <location>
        <begin position="164"/>
        <end position="173"/>
    </location>
</feature>
<feature type="helix" evidence="13">
    <location>
        <begin position="178"/>
        <end position="188"/>
    </location>
</feature>
<feature type="helix" evidence="13">
    <location>
        <begin position="192"/>
        <end position="196"/>
    </location>
</feature>
<comment type="function">
    <text evidence="1 3 6 8 9 10">Transcription factor required for the development of the heart and the spleen (PubMed:16556915, PubMed:19483677, PubMed:22560297, PubMed:9584153). During heart development, acts as a transcriptional activator of NPPA/ANF in cooperation with GATA4 (PubMed:9584153). May cooperate with TBX2 to negatively modulate expression of NPPA/ANF in the atrioventricular canal (PubMed:12023302). Binds to the core DNA motif of NPPA promoter (PubMed:19483677). Together with PBX1, required for spleen development through a mechanism that involves CDKN2B repression (PubMed:22560297). Positively regulates transcription of genes such as COL3A1 and MMP2, resulting in increased pulmonary endothelial fibrosis in response to hypoxia (By similarity).</text>
</comment>
<comment type="subunit">
    <text evidence="1 4 5 6 7 8 10 11">Homodimer (via the homeobox); binds DNA as homodimer. Interacts (via the homeobox) with TBX5 (via the T-box); this complex binds DNA (By similarity). Interacts with HIPK1 and HIPK2, but not HIPK3 (PubMed:9748262). Interacts with the C-terminal zinc finger of GATA4 through its homeobox domain (PubMed:9584153). Also interacts with JARID2 which represses its ability to activate transcription of ANF (PubMed:15542826). Interacts with FBLIM1 (PubMed:14757752). Interacts with TBX18 (PubMed:17584735). Interacts with histone methyltransferase NSD2 (via HMG box) (PubMed:19483677). Interacts with NEDD9 (By similarity). Interacts with TBX1 (PubMed:16556915).</text>
</comment>
<comment type="interaction">
    <interactant intactId="EBI-297021">
        <id>P42582</id>
    </interactant>
    <interactant intactId="EBI-297008">
        <id>Q08369</id>
        <label>Gata4</label>
    </interactant>
    <organismsDiffer>false</organismsDiffer>
    <experiments>4</experiments>
</comment>
<comment type="interaction">
    <interactant intactId="EBI-297021">
        <id>P42582</id>
    </interactant>
    <interactant intactId="EBI-493592">
        <id>Q62315</id>
        <label>Jarid2</label>
    </interactant>
    <organismsDiffer>false</organismsDiffer>
    <experiments>3</experiments>
</comment>
<comment type="interaction">
    <interactant intactId="EBI-297021">
        <id>P42582</id>
    </interactant>
    <interactant intactId="EBI-11518042">
        <id>Q8BVE8-2</id>
        <label>Nsd2</label>
    </interactant>
    <organismsDiffer>false</organismsDiffer>
    <experiments>2</experiments>
</comment>
<comment type="interaction">
    <interactant intactId="EBI-297021">
        <id>P42582</id>
    </interactant>
    <interactant intactId="EBI-936534">
        <id>O94983</id>
        <label>CAMTA2</label>
    </interactant>
    <organismsDiffer>true</organismsDiffer>
    <experiments>2</experiments>
</comment>
<comment type="subcellular location">
    <subcellularLocation>
        <location evidence="8">Nucleus</location>
    </subcellularLocation>
</comment>
<comment type="tissue specificity">
    <text>Predominantly in the adult and embryonic heart, and to a lesser extent in lingual muscle, spleen and stomach.</text>
</comment>
<comment type="developmental stage">
    <text>Expression preceeds the onset of myogenic differentiation, and continues in cardiomyocytes of embryonic, fetal and adult hearts. It is also expressed laterally in future pharyngeal endoderm which is believed to produce the heart inducer. After foregut closure expression in endoderm is limited to the pharyngeal floor, dorsal to the developing heart tube. The thyroid primordium a derivative of the pharyngeal floor continues to express the protein after its levels diminish in the rest of the pharynx.</text>
</comment>
<comment type="domain">
    <text evidence="1">The homeobox domain binds to double-stranded DNA.</text>
</comment>
<comment type="similarity">
    <text evidence="12">Belongs to the NK-2 homeobox family.</text>
</comment>
<protein>
    <recommendedName>
        <fullName>Homeobox protein Nkx-2.5</fullName>
    </recommendedName>
    <alternativeName>
        <fullName>Cardiac-specific homeobox</fullName>
    </alternativeName>
    <alternativeName>
        <fullName>Homeobox protein CSX</fullName>
    </alternativeName>
    <alternativeName>
        <fullName>Homeobox protein NK-2 homolog E</fullName>
    </alternativeName>
</protein>
<sequence>MFPSPALTPTPFSVKDILNLEQQQRSLASGDLSARLEATLAPASCMLAAFKPEAYSGPEAAASGLAELRAEMGPAPSPPKCSPAFPAAPTFYPGAYGDPDPAKDPRADKKELCALQKAVELDKAETDGAERPRARRRRKPRVLFSQAQVYELERRFKQQRYLSAPERDQLASVLKLTSTQVKIWFQNRRYKCKRQRQDQTLELLGPPPPPARRIAVPVLVRDGKPCLGDPAAYAPAYGVGLNAYGYNAYPYPSYGGAACSPGYSCAAYPAAPPAAQPPAASANSNFVNFGVGDLNTVQSPGMPQGNSGVSTLHGIRAW</sequence>
<accession>P42582</accession>
<accession>P97335</accession>